<accession>B5LMS0</accession>
<name>NDHH_CICAR</name>
<organism>
    <name type="scientific">Cicer arietinum</name>
    <name type="common">Chickpea</name>
    <name type="synonym">Garbanzo</name>
    <dbReference type="NCBI Taxonomy" id="3827"/>
    <lineage>
        <taxon>Eukaryota</taxon>
        <taxon>Viridiplantae</taxon>
        <taxon>Streptophyta</taxon>
        <taxon>Embryophyta</taxon>
        <taxon>Tracheophyta</taxon>
        <taxon>Spermatophyta</taxon>
        <taxon>Magnoliopsida</taxon>
        <taxon>eudicotyledons</taxon>
        <taxon>Gunneridae</taxon>
        <taxon>Pentapetalae</taxon>
        <taxon>rosids</taxon>
        <taxon>fabids</taxon>
        <taxon>Fabales</taxon>
        <taxon>Fabaceae</taxon>
        <taxon>Papilionoideae</taxon>
        <taxon>50 kb inversion clade</taxon>
        <taxon>NPAAA clade</taxon>
        <taxon>Hologalegina</taxon>
        <taxon>IRL clade</taxon>
        <taxon>Cicereae</taxon>
        <taxon>Cicer</taxon>
    </lineage>
</organism>
<protein>
    <recommendedName>
        <fullName evidence="1">NAD(P)H-quinone oxidoreductase subunit H, chloroplastic</fullName>
        <ecNumber evidence="1">7.1.1.-</ecNumber>
    </recommendedName>
    <alternativeName>
        <fullName>NAD(P)H dehydrogenase subunit H</fullName>
    </alternativeName>
    <alternativeName>
        <fullName evidence="1">NADH-plastoquinone oxidoreductase 49 kDa subunit</fullName>
    </alternativeName>
    <alternativeName>
        <fullName evidence="1">NADH-plastoquinone oxidoreductase subunit H</fullName>
    </alternativeName>
</protein>
<sequence length="393" mass="45783">MNVPTTRKDLMIVNMGPQHPSMHGVLRLIVTLDGEDVIDCEPILGYLHRGMEKIAENRTIIQYLPYVTRWDYLATMFTEAITVNGPEQLGNIQVPKRASYIRVIMLELSRIASHLLWLGPFMADIGAQTPFFYIFRERELIYDLFEAATGMRMMHNFFRIGGVSADLPYGWIDKCFDFCNYFLTRVIEYQKLITRNPIFLERVEGVGIIGREEVINWGLSGPMLRASGIQWDLRKVDNYECYEEFDWEVQWQKEGDSLARYLVRIGEMMESIKIIQQALEGIPGGPYENLEIRSFDREKEPEWNDFEYRFIGKKSSPTFELPKQELYVRVEAPKGELGIFLIGDQNGFPWRWKIRPPGFINLQILPQLVKRMKLADIMTILGSIDIIMGEIDR</sequence>
<comment type="function">
    <text evidence="1">NDH shuttles electrons from NAD(P)H:plastoquinone, via FMN and iron-sulfur (Fe-S) centers, to quinones in the photosynthetic chain and possibly in a chloroplast respiratory chain. The immediate electron acceptor for the enzyme in this species is believed to be plastoquinone. Couples the redox reaction to proton translocation, and thus conserves the redox energy in a proton gradient.</text>
</comment>
<comment type="catalytic activity">
    <reaction evidence="1">
        <text>a plastoquinone + NADH + (n+1) H(+)(in) = a plastoquinol + NAD(+) + n H(+)(out)</text>
        <dbReference type="Rhea" id="RHEA:42608"/>
        <dbReference type="Rhea" id="RHEA-COMP:9561"/>
        <dbReference type="Rhea" id="RHEA-COMP:9562"/>
        <dbReference type="ChEBI" id="CHEBI:15378"/>
        <dbReference type="ChEBI" id="CHEBI:17757"/>
        <dbReference type="ChEBI" id="CHEBI:57540"/>
        <dbReference type="ChEBI" id="CHEBI:57945"/>
        <dbReference type="ChEBI" id="CHEBI:62192"/>
    </reaction>
</comment>
<comment type="catalytic activity">
    <reaction evidence="1">
        <text>a plastoquinone + NADPH + (n+1) H(+)(in) = a plastoquinol + NADP(+) + n H(+)(out)</text>
        <dbReference type="Rhea" id="RHEA:42612"/>
        <dbReference type="Rhea" id="RHEA-COMP:9561"/>
        <dbReference type="Rhea" id="RHEA-COMP:9562"/>
        <dbReference type="ChEBI" id="CHEBI:15378"/>
        <dbReference type="ChEBI" id="CHEBI:17757"/>
        <dbReference type="ChEBI" id="CHEBI:57783"/>
        <dbReference type="ChEBI" id="CHEBI:58349"/>
        <dbReference type="ChEBI" id="CHEBI:62192"/>
    </reaction>
</comment>
<comment type="subunit">
    <text evidence="1">NDH is composed of at least 16 different subunits, 5 of which are encoded in the nucleus.</text>
</comment>
<comment type="subcellular location">
    <subcellularLocation>
        <location evidence="1">Plastid</location>
        <location evidence="1">Chloroplast thylakoid membrane</location>
        <topology evidence="1">Peripheral membrane protein</topology>
        <orientation evidence="1">Stromal side</orientation>
    </subcellularLocation>
</comment>
<comment type="similarity">
    <text evidence="1">Belongs to the complex I 49 kDa subunit family.</text>
</comment>
<evidence type="ECO:0000255" key="1">
    <source>
        <dbReference type="HAMAP-Rule" id="MF_01358"/>
    </source>
</evidence>
<dbReference type="EC" id="7.1.1.-" evidence="1"/>
<dbReference type="EMBL" id="EU835853">
    <property type="protein sequence ID" value="ACH41117.1"/>
    <property type="molecule type" value="Genomic_DNA"/>
</dbReference>
<dbReference type="RefSeq" id="YP_002149779.1">
    <property type="nucleotide sequence ID" value="NC_011163.1"/>
</dbReference>
<dbReference type="SMR" id="B5LMS0"/>
<dbReference type="GeneID" id="6797537"/>
<dbReference type="KEGG" id="cam:6797537"/>
<dbReference type="OrthoDB" id="1864536at2759"/>
<dbReference type="Proteomes" id="UP000087171">
    <property type="component" value="Chloroplast Pltd"/>
</dbReference>
<dbReference type="GO" id="GO:0009535">
    <property type="term" value="C:chloroplast thylakoid membrane"/>
    <property type="evidence" value="ECO:0007669"/>
    <property type="project" value="UniProtKB-SubCell"/>
</dbReference>
<dbReference type="GO" id="GO:0051287">
    <property type="term" value="F:NAD binding"/>
    <property type="evidence" value="ECO:0007669"/>
    <property type="project" value="InterPro"/>
</dbReference>
<dbReference type="GO" id="GO:0016655">
    <property type="term" value="F:oxidoreductase activity, acting on NAD(P)H, quinone or similar compound as acceptor"/>
    <property type="evidence" value="ECO:0007669"/>
    <property type="project" value="UniProtKB-UniRule"/>
</dbReference>
<dbReference type="GO" id="GO:0048038">
    <property type="term" value="F:quinone binding"/>
    <property type="evidence" value="ECO:0007669"/>
    <property type="project" value="UniProtKB-KW"/>
</dbReference>
<dbReference type="GO" id="GO:0019684">
    <property type="term" value="P:photosynthesis, light reaction"/>
    <property type="evidence" value="ECO:0007669"/>
    <property type="project" value="UniProtKB-UniRule"/>
</dbReference>
<dbReference type="FunFam" id="1.10.645.10:FF:000003">
    <property type="entry name" value="NAD(P)H-quinone oxidoreductase subunit H, chloroplastic"/>
    <property type="match status" value="1"/>
</dbReference>
<dbReference type="Gene3D" id="1.10.645.10">
    <property type="entry name" value="Cytochrome-c3 Hydrogenase, chain B"/>
    <property type="match status" value="1"/>
</dbReference>
<dbReference type="HAMAP" id="MF_01358">
    <property type="entry name" value="NDH1_NuoD"/>
    <property type="match status" value="1"/>
</dbReference>
<dbReference type="InterPro" id="IPR001135">
    <property type="entry name" value="NADH_Q_OxRdtase_suD"/>
</dbReference>
<dbReference type="InterPro" id="IPR014029">
    <property type="entry name" value="NADH_UbQ_OxRdtase_49kDa_CS"/>
</dbReference>
<dbReference type="InterPro" id="IPR022885">
    <property type="entry name" value="NDH1_su_D/H"/>
</dbReference>
<dbReference type="InterPro" id="IPR029014">
    <property type="entry name" value="NiFe-Hase_large"/>
</dbReference>
<dbReference type="NCBIfam" id="NF004739">
    <property type="entry name" value="PRK06075.1"/>
    <property type="match status" value="1"/>
</dbReference>
<dbReference type="NCBIfam" id="NF005649">
    <property type="entry name" value="PRK07415.1"/>
    <property type="match status" value="1"/>
</dbReference>
<dbReference type="PANTHER" id="PTHR11993:SF10">
    <property type="entry name" value="NADH DEHYDROGENASE [UBIQUINONE] IRON-SULFUR PROTEIN 2, MITOCHONDRIAL"/>
    <property type="match status" value="1"/>
</dbReference>
<dbReference type="PANTHER" id="PTHR11993">
    <property type="entry name" value="NADH-UBIQUINONE OXIDOREDUCTASE 49 KDA SUBUNIT"/>
    <property type="match status" value="1"/>
</dbReference>
<dbReference type="Pfam" id="PF00346">
    <property type="entry name" value="Complex1_49kDa"/>
    <property type="match status" value="1"/>
</dbReference>
<dbReference type="SUPFAM" id="SSF56762">
    <property type="entry name" value="HydB/Nqo4-like"/>
    <property type="match status" value="1"/>
</dbReference>
<dbReference type="PROSITE" id="PS00535">
    <property type="entry name" value="COMPLEX1_49K"/>
    <property type="match status" value="1"/>
</dbReference>
<feature type="chain" id="PRO_0000357977" description="NAD(P)H-quinone oxidoreductase subunit H, chloroplastic">
    <location>
        <begin position="1"/>
        <end position="393"/>
    </location>
</feature>
<keyword id="KW-0150">Chloroplast</keyword>
<keyword id="KW-0472">Membrane</keyword>
<keyword id="KW-0520">NAD</keyword>
<keyword id="KW-0521">NADP</keyword>
<keyword id="KW-0934">Plastid</keyword>
<keyword id="KW-0618">Plastoquinone</keyword>
<keyword id="KW-0874">Quinone</keyword>
<keyword id="KW-1185">Reference proteome</keyword>
<keyword id="KW-0793">Thylakoid</keyword>
<keyword id="KW-1278">Translocase</keyword>
<keyword id="KW-0813">Transport</keyword>
<proteinExistence type="inferred from homology"/>
<geneLocation type="chloroplast"/>
<gene>
    <name evidence="1" type="primary">ndhH</name>
</gene>
<reference key="1">
    <citation type="journal article" date="2008" name="Mol. Phylogenet. Evol.">
        <title>Complete plastid genome sequence of the chickpea (Cicer arietinum) and the phylogenetic distribution of rps12 and clpP intron losses among legumes (Leguminosae).</title>
        <authorList>
            <person name="Jansen R.K."/>
            <person name="Wojciechowski M.F."/>
            <person name="Sanniyasi E."/>
            <person name="Lee S.-B."/>
            <person name="Daniell H."/>
        </authorList>
    </citation>
    <scope>NUCLEOTIDE SEQUENCE [LARGE SCALE GENOMIC DNA]</scope>
</reference>